<organism>
    <name type="scientific">Cryptococcus neoformans var. neoformans serotype D (strain B-3501A)</name>
    <name type="common">Filobasidiella neoformans</name>
    <dbReference type="NCBI Taxonomy" id="283643"/>
    <lineage>
        <taxon>Eukaryota</taxon>
        <taxon>Fungi</taxon>
        <taxon>Dikarya</taxon>
        <taxon>Basidiomycota</taxon>
        <taxon>Agaricomycotina</taxon>
        <taxon>Tremellomycetes</taxon>
        <taxon>Tremellales</taxon>
        <taxon>Cryptococcaceae</taxon>
        <taxon>Cryptococcus</taxon>
        <taxon>Cryptococcus neoformans species complex</taxon>
    </lineage>
</organism>
<name>SPT4_CRYNB</name>
<reference key="1">
    <citation type="journal article" date="2005" name="Science">
        <title>The genome of the basidiomycetous yeast and human pathogen Cryptococcus neoformans.</title>
        <authorList>
            <person name="Loftus B.J."/>
            <person name="Fung E."/>
            <person name="Roncaglia P."/>
            <person name="Rowley D."/>
            <person name="Amedeo P."/>
            <person name="Bruno D."/>
            <person name="Vamathevan J."/>
            <person name="Miranda M."/>
            <person name="Anderson I.J."/>
            <person name="Fraser J.A."/>
            <person name="Allen J.E."/>
            <person name="Bosdet I.E."/>
            <person name="Brent M.R."/>
            <person name="Chiu R."/>
            <person name="Doering T.L."/>
            <person name="Donlin M.J."/>
            <person name="D'Souza C.A."/>
            <person name="Fox D.S."/>
            <person name="Grinberg V."/>
            <person name="Fu J."/>
            <person name="Fukushima M."/>
            <person name="Haas B.J."/>
            <person name="Huang J.C."/>
            <person name="Janbon G."/>
            <person name="Jones S.J.M."/>
            <person name="Koo H.L."/>
            <person name="Krzywinski M.I."/>
            <person name="Kwon-Chung K.J."/>
            <person name="Lengeler K.B."/>
            <person name="Maiti R."/>
            <person name="Marra M.A."/>
            <person name="Marra R.E."/>
            <person name="Mathewson C.A."/>
            <person name="Mitchell T.G."/>
            <person name="Pertea M."/>
            <person name="Riggs F.R."/>
            <person name="Salzberg S.L."/>
            <person name="Schein J.E."/>
            <person name="Shvartsbeyn A."/>
            <person name="Shin H."/>
            <person name="Shumway M."/>
            <person name="Specht C.A."/>
            <person name="Suh B.B."/>
            <person name="Tenney A."/>
            <person name="Utterback T.R."/>
            <person name="Wickes B.L."/>
            <person name="Wortman J.R."/>
            <person name="Wye N.H."/>
            <person name="Kronstad J.W."/>
            <person name="Lodge J.K."/>
            <person name="Heitman J."/>
            <person name="Davis R.W."/>
            <person name="Fraser C.M."/>
            <person name="Hyman R.W."/>
        </authorList>
    </citation>
    <scope>NUCLEOTIDE SEQUENCE [LARGE SCALE GENOMIC DNA]</scope>
    <source>
        <strain>B-3501A</strain>
    </source>
</reference>
<proteinExistence type="inferred from homology"/>
<comment type="function">
    <text evidence="1">The SPT4-SPT5 complex mediates both activation and inhibition of transcription elongation, and plays a role in pre-mRNA processing. This complex seems to be important for the stability of the RNA polymerase II elongation machinery on the chromatin template but not for the inherent ability of this machinery to translocate down the gene (By similarity).</text>
</comment>
<comment type="subunit">
    <text evidence="1">Component of the SPT4-SPT5 complex. Interacts with RNA polymerase II (By similarity).</text>
</comment>
<comment type="subcellular location">
    <subcellularLocation>
        <location evidence="1">Nucleus</location>
    </subcellularLocation>
    <subcellularLocation>
        <location evidence="1">Chromosome</location>
        <location evidence="1">Centromere</location>
    </subcellularLocation>
    <text evidence="1">Centromere and heterochromatin.</text>
</comment>
<comment type="similarity">
    <text evidence="3">Belongs to the SPT4 family.</text>
</comment>
<accession>P0CR69</accession>
<accession>Q55MV6</accession>
<accession>Q5KB83</accession>
<protein>
    <recommendedName>
        <fullName>Transcription elongation factor SPT4</fullName>
    </recommendedName>
    <alternativeName>
        <fullName>Chromatin elongation factor SPT4</fullName>
    </alternativeName>
</protein>
<keyword id="KW-0137">Centromere</keyword>
<keyword id="KW-0158">Chromosome</keyword>
<keyword id="KW-0479">Metal-binding</keyword>
<keyword id="KW-0507">mRNA processing</keyword>
<keyword id="KW-0539">Nucleus</keyword>
<keyword id="KW-0804">Transcription</keyword>
<keyword id="KW-0862">Zinc</keyword>
<keyword id="KW-0863">Zinc-finger</keyword>
<gene>
    <name type="primary">SPT4</name>
    <name type="ordered locus">CNBH3280</name>
</gene>
<sequence>MPPKSGRAELRACLVCSILQSTNDFLTQGCPNCEDILEMRGSAERVAECTSLLYDGMIAMIEPSESWVARWQRIDKRMRGIYAVRVTGRAPQDVIDAIEARGGVYRPRDAVED</sequence>
<dbReference type="EMBL" id="AAEY01000042">
    <property type="protein sequence ID" value="EAL19229.1"/>
    <property type="molecule type" value="Genomic_DNA"/>
</dbReference>
<dbReference type="RefSeq" id="XP_773876.1">
    <property type="nucleotide sequence ID" value="XM_768783.1"/>
</dbReference>
<dbReference type="SMR" id="P0CR69"/>
<dbReference type="EnsemblFungi" id="AAW45583">
    <property type="protein sequence ID" value="AAW45583"/>
    <property type="gene ID" value="CNI03430"/>
</dbReference>
<dbReference type="GeneID" id="4937853"/>
<dbReference type="KEGG" id="cnb:CNBH3280"/>
<dbReference type="VEuPathDB" id="FungiDB:CNBH3280"/>
<dbReference type="HOGENOM" id="CLU_138052_2_0_1"/>
<dbReference type="GO" id="GO:0000775">
    <property type="term" value="C:chromosome, centromeric region"/>
    <property type="evidence" value="ECO:0007669"/>
    <property type="project" value="UniProtKB-SubCell"/>
</dbReference>
<dbReference type="GO" id="GO:0032044">
    <property type="term" value="C:DSIF complex"/>
    <property type="evidence" value="ECO:0007669"/>
    <property type="project" value="TreeGrafter"/>
</dbReference>
<dbReference type="GO" id="GO:0000993">
    <property type="term" value="F:RNA polymerase II complex binding"/>
    <property type="evidence" value="ECO:0007669"/>
    <property type="project" value="TreeGrafter"/>
</dbReference>
<dbReference type="GO" id="GO:0008270">
    <property type="term" value="F:zinc ion binding"/>
    <property type="evidence" value="ECO:0007669"/>
    <property type="project" value="UniProtKB-KW"/>
</dbReference>
<dbReference type="GO" id="GO:0006397">
    <property type="term" value="P:mRNA processing"/>
    <property type="evidence" value="ECO:0007669"/>
    <property type="project" value="UniProtKB-KW"/>
</dbReference>
<dbReference type="GO" id="GO:0006355">
    <property type="term" value="P:regulation of DNA-templated transcription"/>
    <property type="evidence" value="ECO:0007669"/>
    <property type="project" value="InterPro"/>
</dbReference>
<dbReference type="GO" id="GO:0140673">
    <property type="term" value="P:transcription elongation-coupled chromatin remodeling"/>
    <property type="evidence" value="ECO:0007669"/>
    <property type="project" value="InterPro"/>
</dbReference>
<dbReference type="CDD" id="cd07973">
    <property type="entry name" value="Spt4"/>
    <property type="match status" value="1"/>
</dbReference>
<dbReference type="FunFam" id="3.30.40.210:FF:000002">
    <property type="entry name" value="Transcription elongation factor SPT4 homolog"/>
    <property type="match status" value="1"/>
</dbReference>
<dbReference type="Gene3D" id="3.30.40.210">
    <property type="match status" value="1"/>
</dbReference>
<dbReference type="InterPro" id="IPR029040">
    <property type="entry name" value="RPABC4/Spt4"/>
</dbReference>
<dbReference type="InterPro" id="IPR009287">
    <property type="entry name" value="Spt4"/>
</dbReference>
<dbReference type="InterPro" id="IPR022800">
    <property type="entry name" value="Spt4/RpoE2_Znf"/>
</dbReference>
<dbReference type="InterPro" id="IPR038510">
    <property type="entry name" value="Spt4_sf"/>
</dbReference>
<dbReference type="PANTHER" id="PTHR12882">
    <property type="entry name" value="SUPPRESSOR OF TY 4"/>
    <property type="match status" value="1"/>
</dbReference>
<dbReference type="PANTHER" id="PTHR12882:SF1">
    <property type="entry name" value="TRANSCRIPTION ELONGATION FACTOR SPT4"/>
    <property type="match status" value="1"/>
</dbReference>
<dbReference type="Pfam" id="PF06093">
    <property type="entry name" value="Spt4"/>
    <property type="match status" value="1"/>
</dbReference>
<dbReference type="PIRSF" id="PIRSF025023">
    <property type="entry name" value="Spt4"/>
    <property type="match status" value="1"/>
</dbReference>
<dbReference type="SMART" id="SM01389">
    <property type="entry name" value="Spt4"/>
    <property type="match status" value="1"/>
</dbReference>
<dbReference type="SUPFAM" id="SSF63393">
    <property type="entry name" value="RNA polymerase subunits"/>
    <property type="match status" value="1"/>
</dbReference>
<evidence type="ECO:0000250" key="1"/>
<evidence type="ECO:0000255" key="2"/>
<evidence type="ECO:0000305" key="3"/>
<feature type="chain" id="PRO_0000410296" description="Transcription elongation factor SPT4">
    <location>
        <begin position="1"/>
        <end position="113"/>
    </location>
</feature>
<feature type="zinc finger region" description="C4-type" evidence="2">
    <location>
        <begin position="13"/>
        <end position="33"/>
    </location>
</feature>